<dbReference type="EC" id="3.5.2.6" evidence="4 8 9"/>
<dbReference type="EMBL" id="FJ172674">
    <property type="protein sequence ID" value="ACL31199.1"/>
    <property type="molecule type" value="Genomic_DNA"/>
</dbReference>
<dbReference type="EMBL" id="FJ172676">
    <property type="protein sequence ID" value="ACL31208.1"/>
    <property type="molecule type" value="Genomic_DNA"/>
</dbReference>
<dbReference type="EMBL" id="GU207399">
    <property type="protein sequence ID" value="ADA13244.1"/>
    <property type="molecule type" value="Genomic_DNA"/>
</dbReference>
<dbReference type="EMBL" id="JX131371">
    <property type="protein sequence ID" value="AFP97027.1"/>
    <property type="molecule type" value="Genomic_DNA"/>
</dbReference>
<dbReference type="EMBL" id="AJ550807">
    <property type="protein sequence ID" value="CAD80251.1"/>
    <property type="molecule type" value="Genomic_DNA"/>
</dbReference>
<dbReference type="EMBL" id="AJ628135">
    <property type="protein sequence ID" value="CAF31403.1"/>
    <property type="molecule type" value="Genomic_DNA"/>
</dbReference>
<dbReference type="EMBL" id="AM931299">
    <property type="protein sequence ID" value="CAP62605.1"/>
    <property type="molecule type" value="Genomic_DNA"/>
</dbReference>
<dbReference type="EMBL" id="MN219692">
    <property type="protein sequence ID" value="QDY98369.1"/>
    <property type="molecule type" value="Genomic_DNA"/>
</dbReference>
<dbReference type="RefSeq" id="WP_042862936.1">
    <property type="nucleotide sequence ID" value="NZ_OX638610.1"/>
</dbReference>
<dbReference type="PDB" id="6R73">
    <property type="method" value="X-ray"/>
    <property type="resolution" value="2.30 A"/>
    <property type="chains" value="A/B=21-246"/>
</dbReference>
<dbReference type="PDB" id="6R79">
    <property type="method" value="X-ray"/>
    <property type="resolution" value="1.90 A"/>
    <property type="chains" value="A/B/C/D=22-241"/>
</dbReference>
<dbReference type="PDB" id="6RZR">
    <property type="method" value="X-ray"/>
    <property type="resolution" value="1.90 A"/>
    <property type="chains" value="A/B=21-246"/>
</dbReference>
<dbReference type="PDB" id="6RZS">
    <property type="method" value="X-ray"/>
    <property type="resolution" value="2.20 A"/>
    <property type="chains" value="A/B=21-246"/>
</dbReference>
<dbReference type="PDB" id="6S0H">
    <property type="method" value="X-ray"/>
    <property type="resolution" value="2.85 A"/>
    <property type="chains" value="A/B=21-246"/>
</dbReference>
<dbReference type="PDB" id="6YI4">
    <property type="method" value="X-ray"/>
    <property type="resolution" value="1.70 A"/>
    <property type="chains" value="AAA/BBB/CCC=21-246"/>
</dbReference>
<dbReference type="PDBsum" id="6R73"/>
<dbReference type="PDBsum" id="6R79"/>
<dbReference type="PDBsum" id="6RZR"/>
<dbReference type="PDBsum" id="6RZS"/>
<dbReference type="PDBsum" id="6S0H"/>
<dbReference type="PDBsum" id="6YI4"/>
<dbReference type="SMR" id="Q7WYA8"/>
<dbReference type="ChEMBL" id="CHEMBL1075210"/>
<dbReference type="CARD" id="ARO:3002204">
    <property type="molecule name" value="IMP-13"/>
    <property type="mechanism identifier" value="ARO:0001004"/>
    <property type="mechanism name" value="antibiotic inactivation"/>
</dbReference>
<dbReference type="KEGG" id="ag:CAD80251"/>
<dbReference type="BRENDA" id="3.5.2.6">
    <property type="organism ID" value="5087"/>
</dbReference>
<dbReference type="GO" id="GO:0042597">
    <property type="term" value="C:periplasmic space"/>
    <property type="evidence" value="ECO:0007669"/>
    <property type="project" value="UniProtKB-SubCell"/>
</dbReference>
<dbReference type="GO" id="GO:0008800">
    <property type="term" value="F:beta-lactamase activity"/>
    <property type="evidence" value="ECO:0007669"/>
    <property type="project" value="UniProtKB-EC"/>
</dbReference>
<dbReference type="GO" id="GO:0008270">
    <property type="term" value="F:zinc ion binding"/>
    <property type="evidence" value="ECO:0007669"/>
    <property type="project" value="InterPro"/>
</dbReference>
<dbReference type="GO" id="GO:0017001">
    <property type="term" value="P:antibiotic catabolic process"/>
    <property type="evidence" value="ECO:0007669"/>
    <property type="project" value="InterPro"/>
</dbReference>
<dbReference type="GO" id="GO:0046677">
    <property type="term" value="P:response to antibiotic"/>
    <property type="evidence" value="ECO:0007669"/>
    <property type="project" value="UniProtKB-KW"/>
</dbReference>
<dbReference type="Gene3D" id="3.60.15.10">
    <property type="entry name" value="Ribonuclease Z/Hydroxyacylglutathione hydrolase-like"/>
    <property type="match status" value="1"/>
</dbReference>
<dbReference type="InterPro" id="IPR001018">
    <property type="entry name" value="Beta-lactamase_class-B_CS"/>
</dbReference>
<dbReference type="InterPro" id="IPR001279">
    <property type="entry name" value="Metallo-B-lactamas"/>
</dbReference>
<dbReference type="InterPro" id="IPR050855">
    <property type="entry name" value="NDM-1-like"/>
</dbReference>
<dbReference type="InterPro" id="IPR036866">
    <property type="entry name" value="RibonucZ/Hydroxyglut_hydro"/>
</dbReference>
<dbReference type="NCBIfam" id="NF012229">
    <property type="entry name" value="bla_class_B_core"/>
    <property type="match status" value="1"/>
</dbReference>
<dbReference type="NCBIfam" id="NF033088">
    <property type="entry name" value="bla_subclass_B1"/>
    <property type="match status" value="1"/>
</dbReference>
<dbReference type="NCBIfam" id="NF012145">
    <property type="entry name" value="blaDIM_SIM_IMP"/>
    <property type="match status" value="1"/>
</dbReference>
<dbReference type="NCBIfam" id="NF012147">
    <property type="entry name" value="blaIMP"/>
    <property type="match status" value="1"/>
</dbReference>
<dbReference type="PANTHER" id="PTHR42951:SF4">
    <property type="entry name" value="ACYL-COENZYME A THIOESTERASE MBLAC2"/>
    <property type="match status" value="1"/>
</dbReference>
<dbReference type="PANTHER" id="PTHR42951">
    <property type="entry name" value="METALLO-BETA-LACTAMASE DOMAIN-CONTAINING"/>
    <property type="match status" value="1"/>
</dbReference>
<dbReference type="SMART" id="SM00849">
    <property type="entry name" value="Lactamase_B"/>
    <property type="match status" value="1"/>
</dbReference>
<dbReference type="SUPFAM" id="SSF56281">
    <property type="entry name" value="Metallo-hydrolase/oxidoreductase"/>
    <property type="match status" value="1"/>
</dbReference>
<dbReference type="PROSITE" id="PS00743">
    <property type="entry name" value="BETA_LACTAMASE_B_1"/>
    <property type="match status" value="1"/>
</dbReference>
<dbReference type="PROSITE" id="PS00744">
    <property type="entry name" value="BETA_LACTAMASE_B_2"/>
    <property type="match status" value="1"/>
</dbReference>
<name>BLAB_PSEAI</name>
<organism evidence="16">
    <name type="scientific">Pseudomonas aeruginosa</name>
    <dbReference type="NCBI Taxonomy" id="287"/>
    <lineage>
        <taxon>Bacteria</taxon>
        <taxon>Pseudomonadati</taxon>
        <taxon>Pseudomonadota</taxon>
        <taxon>Gammaproteobacteria</taxon>
        <taxon>Pseudomonadales</taxon>
        <taxon>Pseudomonadaceae</taxon>
        <taxon>Pseudomonas</taxon>
    </lineage>
</organism>
<comment type="function">
    <text evidence="8 9">Confers resistance to the different beta-lactam antibiotics (penicillin, cephalosporin and carbapenem) via the hydrolysis of the beta-lactam ring (PubMed:20974864, PubMed:32205343). Exhibits higher catalytic efficiency toward ticarcillin and piperacillin than blaIMP-1 (PubMed:20974864). Exhibits catalytic activity for carbapenem compounds, but has a preference for imipenem and ertapenem over meropenem (PubMed:20974864). Has high efficiency for the hydrolysis of cefuroxime (PubMed:20974864). Exhibits hydrolysis of all cephalosporins tested (PubMed:20974864). Exhibits no hydrolysis of temocillin, the 6-alpha-methoxy semisynthetic derivative of ticarcillin (PubMed:20974864).</text>
</comment>
<comment type="catalytic activity">
    <reaction evidence="4 8 9">
        <text>a beta-lactam + H2O = a substituted beta-amino acid</text>
        <dbReference type="Rhea" id="RHEA:20401"/>
        <dbReference type="ChEBI" id="CHEBI:15377"/>
        <dbReference type="ChEBI" id="CHEBI:35627"/>
        <dbReference type="ChEBI" id="CHEBI:140347"/>
        <dbReference type="EC" id="3.5.2.6"/>
    </reaction>
</comment>
<comment type="cofactor">
    <cofactor evidence="4 9">
        <name>Zn(2+)</name>
        <dbReference type="ChEBI" id="CHEBI:29105"/>
    </cofactor>
</comment>
<comment type="biophysicochemical properties">
    <kinetics>
        <KM evidence="8">210 uM for ampicillin (at 37 degrees Celsius and pH 7.5)</KM>
        <KM evidence="8">150 uM for piperacillin (at 37 degrees Celsius and pH 7.5)</KM>
        <KM evidence="8">130 uM for ticarcillin (at 37 degrees Celsius and pH 7.5)</KM>
        <KM evidence="8">25 uM for cephalotin (at 37 degrees Celsius and pH 7.5)</KM>
        <KM evidence="8">35 uM for cefoxitin (at 37 degrees Celsius and pH 7.5)</KM>
        <KM evidence="8">9 uM for ceftazidime (at 37 degrees Celsius and pH 7.5)</KM>
        <KM evidence="8">23 uM for cefuroxime (at 37 degrees Celsius and pH 7.5)</KM>
        <KM evidence="8">33 uM for cefotaxime (at 37 degrees Celsius and pH 7.5)</KM>
        <KM evidence="8">12 uM for cefepime (at 37 degrees Celsius and pH 7.5)</KM>
        <KM evidence="8">120 uM for imipenem (at 37 degrees Celsius and pH 7.5)</KM>
        <KM evidence="8">1.4 uM for meropenem (at 37 degrees Celsius and pH 7.5)</KM>
        <KM evidence="8">1.8 uM for ertapenem (at 37 degrees Celsius and pH 7.5)</KM>
    </kinetics>
</comment>
<comment type="subunit">
    <text evidence="1">Monomer.</text>
</comment>
<comment type="subcellular location">
    <subcellularLocation>
        <location evidence="1">Periplasm</location>
    </subcellularLocation>
</comment>
<comment type="miscellaneous">
    <text evidence="5 6 7 8 11">Pseudomonas aeruginosa strains carrying this gene (identified by PCR) have been isolated from hospital patients in Italy, France, Argentina and Thailand.</text>
</comment>
<comment type="similarity">
    <text evidence="12">Belongs to the metallo-beta-lactamase superfamily. Class-B beta-lactamase family.</text>
</comment>
<comment type="caution">
    <text evidence="5">The gene may be encoded within a transposon and may be responsible for wide geographical dissemination of metallo-beta-lactamase (MBL) genes in Europe.</text>
</comment>
<reference evidence="16" key="1">
    <citation type="journal article" date="2003" name="J. Antimicrob. Chemother.">
        <title>Genetic characterization of a novel metallo-beta-lactamase gene, blaIMP-13, harboured by a novel Tn5051-type transposon disseminating carbapenemase genes in Europe: report from the SENTRY worldwide antimicrobial surveillance programme.</title>
        <authorList>
            <person name="Toleman M.A."/>
            <person name="Biedenbach D.J."/>
            <person name="Bennett D."/>
            <person name="Jones R.N."/>
            <person name="Walsh T.R."/>
        </authorList>
    </citation>
    <scope>NUCLEOTIDE SEQUENCE [GENOMIC DNA]</scope>
    <source>
        <strain evidence="16">86-14571A</strain>
    </source>
</reference>
<reference evidence="17" key="2">
    <citation type="journal article" date="2005" name="J. Clin. Microbiol.">
        <title>Nosocomial outbreak caused by multidrug-resistant Pseudomonas aeruginosa producing IMP-13 metallo-beta-lactamase.</title>
        <authorList>
            <person name="Pagani L."/>
            <person name="Colinon C."/>
            <person name="Migliavacca R."/>
            <person name="Labonia M."/>
            <person name="Docquier J.D."/>
            <person name="Nucleo E."/>
            <person name="Spalla M."/>
            <person name="Li Bergoli M."/>
            <person name="Rossolini G.M."/>
        </authorList>
    </citation>
    <scope>NUCLEOTIDE SEQUENCE [GENOMIC DNA]</scope>
    <source>
        <strain evidence="17">MV461</strain>
    </source>
</reference>
<reference evidence="13" key="3">
    <citation type="journal article" date="2008" name="Antimicrob. Agents Chemother.">
        <title>First countrywide survey of acquired metallo-beta-lactamases in gram-negative pathogens in Italy.</title>
        <authorList>
            <person name="Rossolini G.M."/>
            <person name="Luzzaro F."/>
            <person name="Migliavacca R."/>
            <person name="Mugnaioli C."/>
            <person name="Pini B."/>
            <person name="De Luca F."/>
            <person name="Perilli M."/>
            <person name="Pollini S."/>
            <person name="Spalla M."/>
            <person name="Amicosante G."/>
            <person name="Toniolo A."/>
            <person name="Pagani L."/>
        </authorList>
    </citation>
    <scope>NUCLEOTIDE SEQUENCE [GENOMIC DNA]</scope>
</reference>
<reference evidence="18" key="4">
    <citation type="submission" date="2008-01" db="EMBL/GenBank/DDBJ databases">
        <title>Clonal dissemination of IMP13-producing Pseudomonas aeruginosa.</title>
        <authorList>
            <person name="Santella G.N."/>
            <person name="Radice M.A."/>
            <person name="Gutkind G.O."/>
        </authorList>
    </citation>
    <scope>NUCLEOTIDE SEQUENCE [GENOMIC DNA]</scope>
    <source>
        <strain evidence="18">H86</strain>
    </source>
</reference>
<reference evidence="14" key="5">
    <citation type="submission" date="2009-11" db="EMBL/GenBank/DDBJ databases">
        <title>Detection of Metallo-beta-lactamase Producing Gram Negative Bacilli in Clinical Isolate from Thailand.</title>
        <authorList>
            <person name="Santanirand P."/>
            <person name="Jumroon N."/>
        </authorList>
    </citation>
    <scope>NUCLEOTIDE SEQUENCE [GENOMIC DNA]</scope>
    <source>
        <strain evidence="14">RA-01700709-Ps</strain>
    </source>
</reference>
<reference evidence="15" key="6">
    <citation type="journal article" date="2012" name="Int. J. Antimicrob. Agents">
        <title>Spread of the bla(IMP-13) gene in French Pseudomonas aeruginosa through sequence types ST621, ST308 and ST111.</title>
        <authorList>
            <person name="Fournier D."/>
            <person name="Jeannot K."/>
            <person name="Robert-Nicoud M."/>
            <person name="Muller E."/>
        </authorList>
    </citation>
    <scope>NUCLEOTIDE SEQUENCE [GENOMIC DNA]</scope>
    <source>
        <strain evidence="15">CNR 11.700</strain>
    </source>
</reference>
<reference evidence="19" key="7">
    <citation type="submission" date="2019-07" db="EMBL/GenBank/DDBJ databases">
        <title>Novel Class B Beta lactamase.</title>
        <authorList>
            <person name="Le Bras C."/>
            <person name="Billet M."/>
            <person name="Charrier C."/>
            <person name="Hawser S."/>
            <person name="Morrissey I."/>
            <person name="Motyl M."/>
            <person name="Young K."/>
        </authorList>
    </citation>
    <scope>NUCLEOTIDE SEQUENCE [GENOMIC DNA]</scope>
    <source>
        <strain evidence="19">1849458</strain>
    </source>
</reference>
<reference key="8">
    <citation type="journal article" date="2011" name="Antimicrob. Agents Chemother.">
        <title>Purification and biochemical characterization of IMP-13 metallo-beta-lactamase.</title>
        <authorList>
            <person name="Santella G."/>
            <person name="Docquier J.D."/>
            <person name="Gutkind G."/>
            <person name="Rossolini G.M."/>
            <person name="Radice M."/>
        </authorList>
    </citation>
    <scope>FUNCTION</scope>
    <scope>CATALYTIC ACTIVITY</scope>
    <scope>BIOPHYSICOCHEMICAL PROPERTIES</scope>
</reference>
<reference evidence="20 21 22 23 24" key="9">
    <citation type="journal article" date="2020" name="Antimicrob. Agents Chemother.">
        <title>Structure and Molecular Recognition Mechanism of IMP-13 Metallo-beta-Lactamase.</title>
        <authorList>
            <person name="Softley C.A."/>
            <person name="Zak K.M."/>
            <person name="Bostock M.J."/>
            <person name="Fino R."/>
            <person name="Zhou R.X."/>
            <person name="Kolonko M."/>
            <person name="Mejdi-Nitiu R."/>
            <person name="Meyer H."/>
            <person name="Sattler M."/>
            <person name="Popowicz G.M."/>
        </authorList>
    </citation>
    <scope>X-RAY CRYSTALLOGRAPHY (1.90 ANGSTROMS) OF 21-246 IN APO FORM AND IN COMPLEX WITH DORIPENEM; ERTAPENEM; IMIPENEM; MEROPENEM AND ZINC</scope>
    <scope>FUNCTION</scope>
    <scope>CATALYTIC ACTIVITY</scope>
    <scope>COFACTOR</scope>
</reference>
<reference key="10">
    <citation type="journal article" date="2020" name="Antimicrob. Agents Chemother.">
        <title>Correction for Softley et al., 'Structure and Molecular Recognition Mechanism of IMP-13 Metallo-beta-Lactamase'.</title>
        <authorList>
            <person name="Softley C.A."/>
            <person name="Zak K.M."/>
            <person name="Bostock M.J."/>
            <person name="Fino R."/>
            <person name="Zhou R.X."/>
            <person name="Kolonko M."/>
            <person name="Mejdi-Nitiu R."/>
            <person name="Meyer H."/>
            <person name="Sattler M."/>
            <person name="Popowicz G.M."/>
        </authorList>
    </citation>
    <scope>ERRATUM OF PUBMED:32205343</scope>
</reference>
<reference evidence="25" key="11">
    <citation type="submission" date="2020-03" db="PDB data bank">
        <title>Structure of IMP-13 metallo-beta-lactamase complexed with citrate anion.</title>
        <authorList>
            <person name="Zak K.M."/>
            <person name="Zhou R.X."/>
            <person name="Softley C.A."/>
            <person name="Bostock M.J."/>
            <person name="Sattler M."/>
            <person name="Popowicz G.M."/>
        </authorList>
    </citation>
    <scope>X-RAY CRYSTALLOGRAPHY (1.70 ANGSTROMS) OF 21-246 IN COMPLEX WITH ZINC</scope>
</reference>
<accession>Q7WYA8</accession>
<accession>A0A5B8KSB5</accession>
<keyword id="KW-0002">3D-structure</keyword>
<keyword id="KW-0046">Antibiotic resistance</keyword>
<keyword id="KW-0378">Hydrolase</keyword>
<keyword id="KW-0479">Metal-binding</keyword>
<keyword id="KW-0574">Periplasm</keyword>
<keyword id="KW-0732">Signal</keyword>
<keyword id="KW-0862">Zinc</keyword>
<protein>
    <recommendedName>
        <fullName evidence="12">Metallo-beta-lactamase type 2</fullName>
        <ecNumber evidence="4 8 9">3.5.2.6</ecNumber>
    </recommendedName>
    <alternativeName>
        <fullName evidence="12">B2 metallo-beta-lactamase</fullName>
    </alternativeName>
    <alternativeName>
        <fullName evidence="12">BLA-IMP</fullName>
    </alternativeName>
    <alternativeName>
        <fullName evidence="4">Beta-lactamase</fullName>
    </alternativeName>
    <alternativeName>
        <fullName evidence="12">Beta-lactamase type II</fullName>
    </alternativeName>
    <alternativeName>
        <fullName evidence="12">Metallo-beta-lactamase type II</fullName>
    </alternativeName>
</protein>
<proteinExistence type="evidence at protein level"/>
<gene>
    <name evidence="16" type="primary">bla-imp13</name>
    <name evidence="19" type="synonym">blaIMP</name>
</gene>
<feature type="signal peptide" evidence="3">
    <location>
        <begin position="1"/>
        <end position="20"/>
    </location>
</feature>
<feature type="chain" id="PRO_5007711159" description="Metallo-beta-lactamase type 2" evidence="3">
    <location>
        <begin position="21"/>
        <end position="246"/>
    </location>
</feature>
<feature type="binding site" evidence="9 10 20 21 22 23 24 25">
    <location>
        <position position="95"/>
    </location>
    <ligand>
        <name>Zn(2+)</name>
        <dbReference type="ChEBI" id="CHEBI:29105"/>
        <label>1</label>
    </ligand>
</feature>
<feature type="binding site" evidence="9 10 20 21 22 23 24 25">
    <location>
        <position position="97"/>
    </location>
    <ligand>
        <name>Zn(2+)</name>
        <dbReference type="ChEBI" id="CHEBI:29105"/>
        <label>1</label>
    </ligand>
</feature>
<feature type="binding site" evidence="9">
    <location>
        <position position="99"/>
    </location>
    <ligand>
        <name>a beta-lactam</name>
        <dbReference type="ChEBI" id="CHEBI:35627"/>
    </ligand>
</feature>
<feature type="binding site" evidence="9 10 20 21 22 23 24 25">
    <location>
        <position position="99"/>
    </location>
    <ligand>
        <name>Zn(2+)</name>
        <dbReference type="ChEBI" id="CHEBI:29105"/>
        <label>2</label>
    </ligand>
</feature>
<feature type="binding site" evidence="9 10 20 21 22 23 24 25">
    <location>
        <position position="157"/>
    </location>
    <ligand>
        <name>Zn(2+)</name>
        <dbReference type="ChEBI" id="CHEBI:29105"/>
        <label>1</label>
    </ligand>
</feature>
<feature type="binding site" evidence="9 10 20 21 22 23 24 25">
    <location>
        <position position="176"/>
    </location>
    <ligand>
        <name>Zn(2+)</name>
        <dbReference type="ChEBI" id="CHEBI:29105"/>
        <label>2</label>
    </ligand>
</feature>
<feature type="binding site" evidence="2">
    <location>
        <position position="179"/>
    </location>
    <ligand>
        <name>a beta-lactam</name>
        <dbReference type="ChEBI" id="CHEBI:35627"/>
    </ligand>
</feature>
<feature type="binding site" evidence="9">
    <location>
        <position position="185"/>
    </location>
    <ligand>
        <name>a beta-lactam</name>
        <dbReference type="ChEBI" id="CHEBI:35627"/>
    </ligand>
</feature>
<feature type="binding site" evidence="9 10 20 21 22 23 24 25">
    <location>
        <position position="215"/>
    </location>
    <ligand>
        <name>Zn(2+)</name>
        <dbReference type="ChEBI" id="CHEBI:29105"/>
        <label>2</label>
    </ligand>
</feature>
<feature type="sequence conflict" description="In Ref. 7; QDY98369." evidence="12" ref="7">
    <original>V</original>
    <variation>F</variation>
    <location>
        <position position="49"/>
    </location>
</feature>
<feature type="strand" evidence="27">
    <location>
        <begin position="26"/>
        <end position="31"/>
    </location>
</feature>
<feature type="strand" evidence="27">
    <location>
        <begin position="34"/>
        <end position="46"/>
    </location>
</feature>
<feature type="strand" evidence="27">
    <location>
        <begin position="48"/>
        <end position="58"/>
    </location>
</feature>
<feature type="strand" evidence="27">
    <location>
        <begin position="61"/>
        <end position="66"/>
    </location>
</feature>
<feature type="helix" evidence="27">
    <location>
        <begin position="71"/>
        <end position="82"/>
    </location>
</feature>
<feature type="turn" evidence="27">
    <location>
        <begin position="83"/>
        <end position="85"/>
    </location>
</feature>
<feature type="strand" evidence="27">
    <location>
        <begin position="87"/>
        <end position="92"/>
    </location>
</feature>
<feature type="strand" evidence="27">
    <location>
        <begin position="94"/>
        <end position="97"/>
    </location>
</feature>
<feature type="helix" evidence="27">
    <location>
        <begin position="98"/>
        <end position="101"/>
    </location>
</feature>
<feature type="helix" evidence="27">
    <location>
        <begin position="104"/>
        <end position="109"/>
    </location>
</feature>
<feature type="strand" evidence="27">
    <location>
        <begin position="114"/>
        <end position="117"/>
    </location>
</feature>
<feature type="helix" evidence="27">
    <location>
        <begin position="118"/>
        <end position="126"/>
    </location>
</feature>
<feature type="strand" evidence="27">
    <location>
        <begin position="133"/>
        <end position="136"/>
    </location>
</feature>
<feature type="strand" evidence="27">
    <location>
        <begin position="139"/>
        <end position="144"/>
    </location>
</feature>
<feature type="turn" evidence="27">
    <location>
        <begin position="145"/>
        <end position="147"/>
    </location>
</feature>
<feature type="strand" evidence="27">
    <location>
        <begin position="148"/>
        <end position="151"/>
    </location>
</feature>
<feature type="strand" evidence="27">
    <location>
        <begin position="155"/>
        <end position="158"/>
    </location>
</feature>
<feature type="strand" evidence="27">
    <location>
        <begin position="163"/>
        <end position="166"/>
    </location>
</feature>
<feature type="turn" evidence="27">
    <location>
        <begin position="167"/>
        <end position="170"/>
    </location>
</feature>
<feature type="strand" evidence="27">
    <location>
        <begin position="171"/>
        <end position="175"/>
    </location>
</feature>
<feature type="turn" evidence="27">
    <location>
        <begin position="191"/>
        <end position="193"/>
    </location>
</feature>
<feature type="helix" evidence="27">
    <location>
        <begin position="194"/>
        <end position="204"/>
    </location>
</feature>
<feature type="turn" evidence="26">
    <location>
        <begin position="205"/>
        <end position="207"/>
    </location>
</feature>
<feature type="strand" evidence="27">
    <location>
        <begin position="209"/>
        <end position="216"/>
    </location>
</feature>
<feature type="helix" evidence="27">
    <location>
        <begin position="222"/>
        <end position="240"/>
    </location>
</feature>
<sequence>MKKLFVLCVCFFCSITAAGAALPDLKIEKLEEGVFVHTSFEEVNGWGVVTKHGLVVLVNTDAYLIDTPFTATDTEKLVNWFVERGYEIKGTISSHFHSDSTGGIEWLNSQSIPTYASELTNELLKKSGKVQAKYSFSEVSYWLVKNKIEVFYPGPGHTQDNLVVWLPESKILFGGCFIKPHGLGNLGDANLEAWPKSAKILMSKYGKAKLVVSSHSEKGDASLMKRTWEQALKGLKESKKTSSPSN</sequence>
<evidence type="ECO:0000250" key="1">
    <source>
        <dbReference type="UniProtKB" id="P25910"/>
    </source>
</evidence>
<evidence type="ECO:0000250" key="2">
    <source>
        <dbReference type="UniProtKB" id="P52699"/>
    </source>
</evidence>
<evidence type="ECO:0000255" key="3"/>
<evidence type="ECO:0000255" key="4">
    <source>
        <dbReference type="RuleBase" id="RU361140"/>
    </source>
</evidence>
<evidence type="ECO:0000269" key="5">
    <source>
    </source>
</evidence>
<evidence type="ECO:0000269" key="6">
    <source>
    </source>
</evidence>
<evidence type="ECO:0000269" key="7">
    <source>
    </source>
</evidence>
<evidence type="ECO:0000269" key="8">
    <source>
    </source>
</evidence>
<evidence type="ECO:0000269" key="9">
    <source>
    </source>
</evidence>
<evidence type="ECO:0000269" key="10">
    <source ref="11"/>
</evidence>
<evidence type="ECO:0000269" key="11">
    <source ref="5"/>
</evidence>
<evidence type="ECO:0000305" key="12"/>
<evidence type="ECO:0000312" key="13">
    <source>
        <dbReference type="EMBL" id="ACL31199.1"/>
    </source>
</evidence>
<evidence type="ECO:0000312" key="14">
    <source>
        <dbReference type="EMBL" id="ADA13244.1"/>
    </source>
</evidence>
<evidence type="ECO:0000312" key="15">
    <source>
        <dbReference type="EMBL" id="AFP97027.1"/>
    </source>
</evidence>
<evidence type="ECO:0000312" key="16">
    <source>
        <dbReference type="EMBL" id="CAD80251.1"/>
    </source>
</evidence>
<evidence type="ECO:0000312" key="17">
    <source>
        <dbReference type="EMBL" id="CAF31403.1"/>
    </source>
</evidence>
<evidence type="ECO:0000312" key="18">
    <source>
        <dbReference type="EMBL" id="CAP62605.1"/>
    </source>
</evidence>
<evidence type="ECO:0000312" key="19">
    <source>
        <dbReference type="EMBL" id="QDY98369.1"/>
    </source>
</evidence>
<evidence type="ECO:0007744" key="20">
    <source>
        <dbReference type="PDB" id="6R73"/>
    </source>
</evidence>
<evidence type="ECO:0007744" key="21">
    <source>
        <dbReference type="PDB" id="6R79"/>
    </source>
</evidence>
<evidence type="ECO:0007744" key="22">
    <source>
        <dbReference type="PDB" id="6RZR"/>
    </source>
</evidence>
<evidence type="ECO:0007744" key="23">
    <source>
        <dbReference type="PDB" id="6RZS"/>
    </source>
</evidence>
<evidence type="ECO:0007744" key="24">
    <source>
        <dbReference type="PDB" id="6S0H"/>
    </source>
</evidence>
<evidence type="ECO:0007744" key="25">
    <source>
        <dbReference type="PDB" id="6YI4"/>
    </source>
</evidence>
<evidence type="ECO:0007829" key="26">
    <source>
        <dbReference type="PDB" id="6R73"/>
    </source>
</evidence>
<evidence type="ECO:0007829" key="27">
    <source>
        <dbReference type="PDB" id="6R79"/>
    </source>
</evidence>